<name>3SX7_OPHHA</name>
<keyword id="KW-0008">Acetylcholine receptor inhibiting toxin</keyword>
<keyword id="KW-1015">Disulfide bond</keyword>
<keyword id="KW-0872">Ion channel impairing toxin</keyword>
<keyword id="KW-0528">Neurotoxin</keyword>
<keyword id="KW-0629">Postsynaptic neurotoxin</keyword>
<keyword id="KW-0964">Secreted</keyword>
<keyword id="KW-0732">Signal</keyword>
<keyword id="KW-0800">Toxin</keyword>
<reference key="1">
    <citation type="journal article" date="2004" name="Toxicon">
        <title>Cloning and purification of alpha-neurotoxins from king cobra (Ophiophagus hannah).</title>
        <authorList>
            <person name="He Y.-Y."/>
            <person name="Lee W.-H."/>
            <person name="Zhang Y."/>
        </authorList>
    </citation>
    <scope>NUCLEOTIDE SEQUENCE [MRNA]</scope>
    <source>
        <tissue>Venom gland</tissue>
    </source>
</reference>
<evidence type="ECO:0000250" key="1"/>
<evidence type="ECO:0000250" key="2">
    <source>
        <dbReference type="UniProtKB" id="P0DKR6"/>
    </source>
</evidence>
<evidence type="ECO:0000250" key="3">
    <source>
        <dbReference type="UniProtKB" id="P83302"/>
    </source>
</evidence>
<evidence type="ECO:0000303" key="4">
    <source>
    </source>
</evidence>
<evidence type="ECO:0000305" key="5"/>
<dbReference type="EMBL" id="AY596938">
    <property type="protein sequence ID" value="AAT97260.1"/>
    <property type="molecule type" value="mRNA"/>
</dbReference>
<dbReference type="SMR" id="Q53B48"/>
<dbReference type="GO" id="GO:0005576">
    <property type="term" value="C:extracellular region"/>
    <property type="evidence" value="ECO:0007669"/>
    <property type="project" value="UniProtKB-SubCell"/>
</dbReference>
<dbReference type="GO" id="GO:0030550">
    <property type="term" value="F:acetylcholine receptor inhibitor activity"/>
    <property type="evidence" value="ECO:0007669"/>
    <property type="project" value="UniProtKB-KW"/>
</dbReference>
<dbReference type="GO" id="GO:0099106">
    <property type="term" value="F:ion channel regulator activity"/>
    <property type="evidence" value="ECO:0007669"/>
    <property type="project" value="UniProtKB-KW"/>
</dbReference>
<dbReference type="GO" id="GO:0090729">
    <property type="term" value="F:toxin activity"/>
    <property type="evidence" value="ECO:0007669"/>
    <property type="project" value="UniProtKB-KW"/>
</dbReference>
<dbReference type="CDD" id="cd00206">
    <property type="entry name" value="TFP_snake_toxin"/>
    <property type="match status" value="1"/>
</dbReference>
<dbReference type="Gene3D" id="2.10.60.10">
    <property type="entry name" value="CD59"/>
    <property type="match status" value="1"/>
</dbReference>
<dbReference type="InterPro" id="IPR003571">
    <property type="entry name" value="Snake_3FTx"/>
</dbReference>
<dbReference type="InterPro" id="IPR045860">
    <property type="entry name" value="Snake_toxin-like_sf"/>
</dbReference>
<dbReference type="InterPro" id="IPR054131">
    <property type="entry name" value="Toxin_cobra-type"/>
</dbReference>
<dbReference type="Pfam" id="PF21947">
    <property type="entry name" value="Toxin_cobra-type"/>
    <property type="match status" value="1"/>
</dbReference>
<dbReference type="SUPFAM" id="SSF57302">
    <property type="entry name" value="Snake toxin-like"/>
    <property type="match status" value="1"/>
</dbReference>
<protein>
    <recommendedName>
        <fullName evidence="4">Short neurotoxin OH-46</fullName>
    </recommendedName>
    <alternativeName>
        <fullName>Three-finger toxin</fullName>
        <shortName>3FTx</shortName>
    </alternativeName>
</protein>
<organism>
    <name type="scientific">Ophiophagus hannah</name>
    <name type="common">King cobra</name>
    <name type="synonym">Naja hannah</name>
    <dbReference type="NCBI Taxonomy" id="8665"/>
    <lineage>
        <taxon>Eukaryota</taxon>
        <taxon>Metazoa</taxon>
        <taxon>Chordata</taxon>
        <taxon>Craniata</taxon>
        <taxon>Vertebrata</taxon>
        <taxon>Euteleostomi</taxon>
        <taxon>Lepidosauria</taxon>
        <taxon>Squamata</taxon>
        <taxon>Bifurcata</taxon>
        <taxon>Unidentata</taxon>
        <taxon>Episquamata</taxon>
        <taxon>Toxicofera</taxon>
        <taxon>Serpentes</taxon>
        <taxon>Colubroidea</taxon>
        <taxon>Elapidae</taxon>
        <taxon>Elapinae</taxon>
        <taxon>Ophiophagus</taxon>
    </lineage>
</organism>
<proteinExistence type="inferred from homology"/>
<sequence>MKNLLLTFLVVTIVCLDLGYTLICHQVHGLQTCEPAQKFCQIRTTMFFPNHPVLLMGCTYNCPTERYSVCCSTDKCNK</sequence>
<feature type="signal peptide" evidence="1">
    <location>
        <begin position="1"/>
        <end position="21"/>
    </location>
</feature>
<feature type="chain" id="PRO_5000093330" description="Short neurotoxin OH-46">
    <location>
        <begin position="22"/>
        <end position="78"/>
    </location>
</feature>
<feature type="site" description="Important residue for inhibition of muscle alpha-1-beta-1-delta-epsilon (CHRNA1-CHRNB1-CHRND-CHRNE) and neuronal alpha-3-beta-2/CHRNA3-CHRNB2 nAChR" evidence="3">
    <location>
        <position position="28"/>
    </location>
</feature>
<feature type="site" description="Important residue for inhibition of muscle alpha-1-beta-1-delta-epsilon (CHRNA1-CHRNB1-CHRND-CHRNE) and neuronal alpha-3-beta-2/CHRNA3-CHRNB2 nAChR" evidence="3">
    <location>
        <position position="43"/>
    </location>
</feature>
<feature type="site" description="Key residue for inhibition of muscle alpha-1-beta-1-delta-epsilon (CHRNA1-CHRNB1-CHRND-CHRNE) nAChR" evidence="3">
    <location>
        <position position="44"/>
    </location>
</feature>
<feature type="site" description="Important residue for inhibition of muscle alpha-1-beta-1-delta-epsilon (CHRNA1-CHRNB1-CHRND-CHRNE) nAChR" evidence="3">
    <location>
        <position position="45"/>
    </location>
</feature>
<feature type="site" description="Key residue for inhibition of muscle alpha-1-beta-1-delta-epsilon (CHRNA1-CHRNB1-CHRND-CHRNE) and important for inhibition of neuronal alpha-3-beta-2/CHRNA3-CHRNB2 nAChR" evidence="3">
    <location>
        <position position="46"/>
    </location>
</feature>
<feature type="site" description="Important residue for inhibition of muscle alpha-1-beta-1-delta-epsilon (CHRNA1-CHRNB1-CHRND-CHRNE) nAChR" evidence="3">
    <location>
        <position position="47"/>
    </location>
</feature>
<feature type="site" description="Key residue for inhibition of muscle alpha-1-beta-1-delta-epsilon (CHRNA1-CHRNB1-CHRND-CHRNE) and important residue for inhibition of neuronal alpha-3-beta-2/CHRNA3-CHRNB2 nAChR" evidence="3">
    <location>
        <position position="48"/>
    </location>
</feature>
<feature type="site" description="Important residue for inhibition of muscle alpha-1-beta-1-delta-epsilon (CHRNA1-CHRNB1-CHRND-CHRNE) and neuronal alpha-3-beta-2/CHRNA3-CHRNB2 nAChR" evidence="3">
    <location>
        <position position="51"/>
    </location>
</feature>
<feature type="site" description="Important residue for inhibition of muscle alpha-1-beta-1-delta-epsilon (CHRNA1-CHRNB1-CHRND-CHRNE) and neuronal alpha-3-beta-2/CHRNA3-CHRNB2 nAChR" evidence="3">
    <location>
        <position position="66"/>
    </location>
</feature>
<feature type="site" description="Important residue for interaction with muscle alpha-1-beta-1-delta-epsilon (CHRNA1-CHRNB1-CHRND-CHRNE) and neuronal alpha-3-beta-2/CHRNA3-CHRNB2 nAChR" evidence="3">
    <location>
        <position position="67"/>
    </location>
</feature>
<feature type="disulfide bond" evidence="2">
    <location>
        <begin position="24"/>
        <end position="40"/>
    </location>
</feature>
<feature type="disulfide bond" evidence="2">
    <location>
        <begin position="33"/>
        <end position="58"/>
    </location>
</feature>
<feature type="disulfide bond" evidence="2">
    <location>
        <begin position="62"/>
        <end position="70"/>
    </location>
</feature>
<feature type="disulfide bond" evidence="2">
    <location>
        <begin position="71"/>
        <end position="76"/>
    </location>
</feature>
<accession>Q53B48</accession>
<comment type="function">
    <text evidence="3">This three-finger toxin binds and inhibits the nicotinic acetylcholine receptor (nAChR).</text>
</comment>
<comment type="subcellular location">
    <subcellularLocation>
        <location evidence="1">Secreted</location>
    </subcellularLocation>
</comment>
<comment type="tissue specificity">
    <text evidence="5">Expressed by the venom gland.</text>
</comment>
<comment type="miscellaneous">
    <text evidence="5">Is classified as a P-type cytotoxin, since a proline residue stands at position 49 (Pro-31 in standard classification).</text>
</comment>
<comment type="similarity">
    <text evidence="5">Belongs to the three-finger toxin family. Short-chain subfamily.</text>
</comment>